<proteinExistence type="inferred from homology"/>
<gene>
    <name type="ordered locus">Mhun_2915</name>
</gene>
<reference key="1">
    <citation type="journal article" date="2016" name="Stand. Genomic Sci.">
        <title>Complete genome sequence of Methanospirillum hungatei type strain JF1.</title>
        <authorList>
            <person name="Gunsalus R.P."/>
            <person name="Cook L.E."/>
            <person name="Crable B."/>
            <person name="Rohlin L."/>
            <person name="McDonald E."/>
            <person name="Mouttaki H."/>
            <person name="Sieber J.R."/>
            <person name="Poweleit N."/>
            <person name="Zhou H."/>
            <person name="Lapidus A.L."/>
            <person name="Daligault H.E."/>
            <person name="Land M."/>
            <person name="Gilna P."/>
            <person name="Ivanova N."/>
            <person name="Kyrpides N."/>
            <person name="Culley D.E."/>
            <person name="McInerney M.J."/>
        </authorList>
    </citation>
    <scope>NUCLEOTIDE SEQUENCE [LARGE SCALE GENOMIC DNA]</scope>
    <source>
        <strain>ATCC 27890 / DSM 864 / NBRC 100397 / JF-1</strain>
    </source>
</reference>
<organism>
    <name type="scientific">Methanospirillum hungatei JF-1 (strain ATCC 27890 / DSM 864 / NBRC 100397 / JF-1)</name>
    <dbReference type="NCBI Taxonomy" id="323259"/>
    <lineage>
        <taxon>Archaea</taxon>
        <taxon>Methanobacteriati</taxon>
        <taxon>Methanobacteriota</taxon>
        <taxon>Stenosarchaea group</taxon>
        <taxon>Methanomicrobia</taxon>
        <taxon>Methanomicrobiales</taxon>
        <taxon>Methanospirillaceae</taxon>
        <taxon>Methanospirillum</taxon>
    </lineage>
</organism>
<evidence type="ECO:0000255" key="1">
    <source>
        <dbReference type="HAMAP-Rule" id="MF_00243"/>
    </source>
</evidence>
<feature type="chain" id="PRO_1000005736" description="Nicotinamide-nucleotide adenylyltransferase">
    <location>
        <begin position="1"/>
        <end position="174"/>
    </location>
</feature>
<dbReference type="EC" id="2.7.7.1" evidence="1"/>
<dbReference type="EMBL" id="CP000254">
    <property type="protein sequence ID" value="ABD42607.1"/>
    <property type="molecule type" value="Genomic_DNA"/>
</dbReference>
<dbReference type="RefSeq" id="WP_011449860.1">
    <property type="nucleotide sequence ID" value="NC_007796.1"/>
</dbReference>
<dbReference type="SMR" id="Q2FTC2"/>
<dbReference type="FunCoup" id="Q2FTC2">
    <property type="interactions" value="11"/>
</dbReference>
<dbReference type="STRING" id="323259.Mhun_2915"/>
<dbReference type="EnsemblBacteria" id="ABD42607">
    <property type="protein sequence ID" value="ABD42607"/>
    <property type="gene ID" value="Mhun_2915"/>
</dbReference>
<dbReference type="GeneID" id="3924686"/>
<dbReference type="KEGG" id="mhu:Mhun_2915"/>
<dbReference type="eggNOG" id="arCOG00972">
    <property type="taxonomic scope" value="Archaea"/>
</dbReference>
<dbReference type="HOGENOM" id="CLU_108783_0_0_2"/>
<dbReference type="InParanoid" id="Q2FTC2"/>
<dbReference type="OrthoDB" id="264480at2157"/>
<dbReference type="UniPathway" id="UPA00253">
    <property type="reaction ID" value="UER00600"/>
</dbReference>
<dbReference type="Proteomes" id="UP000001941">
    <property type="component" value="Chromosome"/>
</dbReference>
<dbReference type="GO" id="GO:0005737">
    <property type="term" value="C:cytoplasm"/>
    <property type="evidence" value="ECO:0007669"/>
    <property type="project" value="UniProtKB-SubCell"/>
</dbReference>
<dbReference type="GO" id="GO:0005524">
    <property type="term" value="F:ATP binding"/>
    <property type="evidence" value="ECO:0007669"/>
    <property type="project" value="UniProtKB-KW"/>
</dbReference>
<dbReference type="GO" id="GO:0000309">
    <property type="term" value="F:nicotinamide-nucleotide adenylyltransferase activity"/>
    <property type="evidence" value="ECO:0007669"/>
    <property type="project" value="UniProtKB-UniRule"/>
</dbReference>
<dbReference type="GO" id="GO:0009435">
    <property type="term" value="P:NAD biosynthetic process"/>
    <property type="evidence" value="ECO:0007669"/>
    <property type="project" value="UniProtKB-UniRule"/>
</dbReference>
<dbReference type="CDD" id="cd02166">
    <property type="entry name" value="NMNAT_Archaea"/>
    <property type="match status" value="1"/>
</dbReference>
<dbReference type="Gene3D" id="3.40.50.620">
    <property type="entry name" value="HUPs"/>
    <property type="match status" value="1"/>
</dbReference>
<dbReference type="HAMAP" id="MF_00243">
    <property type="entry name" value="NMN_adenylyltr"/>
    <property type="match status" value="1"/>
</dbReference>
<dbReference type="InterPro" id="IPR004821">
    <property type="entry name" value="Cyt_trans-like"/>
</dbReference>
<dbReference type="InterPro" id="IPR006418">
    <property type="entry name" value="NMN_Atrans_arc"/>
</dbReference>
<dbReference type="InterPro" id="IPR014729">
    <property type="entry name" value="Rossmann-like_a/b/a_fold"/>
</dbReference>
<dbReference type="NCBIfam" id="TIGR01527">
    <property type="entry name" value="arch_NMN_Atrans"/>
    <property type="match status" value="1"/>
</dbReference>
<dbReference type="NCBIfam" id="TIGR00125">
    <property type="entry name" value="cyt_tran_rel"/>
    <property type="match status" value="1"/>
</dbReference>
<dbReference type="NCBIfam" id="NF002243">
    <property type="entry name" value="PRK01153.1"/>
    <property type="match status" value="1"/>
</dbReference>
<dbReference type="PANTHER" id="PTHR21342:SF0">
    <property type="entry name" value="BIFUNCTIONAL NMN ADENYLYLTRANSFERASE_NUDIX HYDROLASE"/>
    <property type="match status" value="1"/>
</dbReference>
<dbReference type="PANTHER" id="PTHR21342">
    <property type="entry name" value="PHOSPHOPANTETHEINE ADENYLYLTRANSFERASE"/>
    <property type="match status" value="1"/>
</dbReference>
<dbReference type="Pfam" id="PF01467">
    <property type="entry name" value="CTP_transf_like"/>
    <property type="match status" value="1"/>
</dbReference>
<dbReference type="SUPFAM" id="SSF52374">
    <property type="entry name" value="Nucleotidylyl transferase"/>
    <property type="match status" value="1"/>
</dbReference>
<keyword id="KW-0067">ATP-binding</keyword>
<keyword id="KW-0963">Cytoplasm</keyword>
<keyword id="KW-0520">NAD</keyword>
<keyword id="KW-0547">Nucleotide-binding</keyword>
<keyword id="KW-0548">Nucleotidyltransferase</keyword>
<keyword id="KW-0662">Pyridine nucleotide biosynthesis</keyword>
<keyword id="KW-1185">Reference proteome</keyword>
<keyword id="KW-0808">Transferase</keyword>
<protein>
    <recommendedName>
        <fullName evidence="1">Nicotinamide-nucleotide adenylyltransferase</fullName>
        <ecNumber evidence="1">2.7.7.1</ecNumber>
    </recommendedName>
    <alternativeName>
        <fullName evidence="1">NAD(+) diphosphorylase</fullName>
    </alternativeName>
    <alternativeName>
        <fullName evidence="1">NAD(+) pyrophosphorylase</fullName>
    </alternativeName>
    <alternativeName>
        <fullName evidence="1">NMN adenylyltransferase</fullName>
    </alternativeName>
</protein>
<sequence>MIRALYIGRFQPYHNGHHYVINQIAQEADELIIGIGSAQMSHEPADPFTAGERVLMITGALQDLHKPLYVIPLEDINRNVLWVSHVRAMTPPFHRIYSGNPLVIRLFHEAGIEVLSPAMYERATLSGTKIRDLIACDKPWEDFVPPAVVRVIQEIDGISRIRALNQDDGDCPGR</sequence>
<comment type="catalytic activity">
    <reaction evidence="1">
        <text>beta-nicotinamide D-ribonucleotide + ATP + H(+) = diphosphate + NAD(+)</text>
        <dbReference type="Rhea" id="RHEA:21360"/>
        <dbReference type="ChEBI" id="CHEBI:14649"/>
        <dbReference type="ChEBI" id="CHEBI:15378"/>
        <dbReference type="ChEBI" id="CHEBI:30616"/>
        <dbReference type="ChEBI" id="CHEBI:33019"/>
        <dbReference type="ChEBI" id="CHEBI:57540"/>
        <dbReference type="EC" id="2.7.7.1"/>
    </reaction>
</comment>
<comment type="pathway">
    <text evidence="1">Cofactor biosynthesis; NAD(+) biosynthesis; NAD(+) from nicotinamide D-ribonucleotide: step 1/1.</text>
</comment>
<comment type="subcellular location">
    <subcellularLocation>
        <location evidence="1">Cytoplasm</location>
    </subcellularLocation>
</comment>
<comment type="similarity">
    <text evidence="1">Belongs to the archaeal NMN adenylyltransferase family.</text>
</comment>
<name>NADM_METHJ</name>
<accession>Q2FTC2</accession>